<name>RRAS_MOUSE</name>
<evidence type="ECO:0000250" key="1"/>
<evidence type="ECO:0000250" key="2">
    <source>
        <dbReference type="UniProtKB" id="D3Z8L7"/>
    </source>
</evidence>
<evidence type="ECO:0000250" key="3">
    <source>
        <dbReference type="UniProtKB" id="P10301"/>
    </source>
</evidence>
<evidence type="ECO:0000250" key="4">
    <source>
        <dbReference type="UniProtKB" id="P62070"/>
    </source>
</evidence>
<evidence type="ECO:0000256" key="5">
    <source>
        <dbReference type="SAM" id="MobiDB-lite"/>
    </source>
</evidence>
<evidence type="ECO:0000305" key="6"/>
<keyword id="KW-1003">Cell membrane</keyword>
<keyword id="KW-0342">GTP-binding</keyword>
<keyword id="KW-0378">Hydrolase</keyword>
<keyword id="KW-0449">Lipoprotein</keyword>
<keyword id="KW-0472">Membrane</keyword>
<keyword id="KW-0488">Methylation</keyword>
<keyword id="KW-0547">Nucleotide-binding</keyword>
<keyword id="KW-0564">Palmitate</keyword>
<keyword id="KW-0636">Prenylation</keyword>
<keyword id="KW-1185">Reference proteome</keyword>
<sequence length="218" mass="23764">MSSGAASGTGRGRPRGGGPGPRDPPPGETHKLVVVGGGGVGKSALTIQFIQSYFVSDYDPTIEDSYTKICTVDGIPARLDILDTAGQEEFGAMREQYMRAGNGFLLVFAINDRQSFNEVGKLFTQILRVKDRDDFPIVLVGNKADLENQRQVLRSEASSFSASHHMTYFEASAKLRLNVDEAFEQLVRAVRKYQEQELPPSPPSAPRKKDGGCPCVLL</sequence>
<protein>
    <recommendedName>
        <fullName>Ras-related protein R-Ras</fullName>
        <ecNumber evidence="3">3.6.5.2</ecNumber>
    </recommendedName>
    <alternativeName>
        <fullName>p23</fullName>
    </alternativeName>
</protein>
<organism>
    <name type="scientific">Mus musculus</name>
    <name type="common">Mouse</name>
    <dbReference type="NCBI Taxonomy" id="10090"/>
    <lineage>
        <taxon>Eukaryota</taxon>
        <taxon>Metazoa</taxon>
        <taxon>Chordata</taxon>
        <taxon>Craniata</taxon>
        <taxon>Vertebrata</taxon>
        <taxon>Euteleostomi</taxon>
        <taxon>Mammalia</taxon>
        <taxon>Eutheria</taxon>
        <taxon>Euarchontoglires</taxon>
        <taxon>Glires</taxon>
        <taxon>Rodentia</taxon>
        <taxon>Myomorpha</taxon>
        <taxon>Muroidea</taxon>
        <taxon>Muridae</taxon>
        <taxon>Murinae</taxon>
        <taxon>Mus</taxon>
        <taxon>Mus</taxon>
    </lineage>
</organism>
<reference key="1">
    <citation type="journal article" date="1987" name="Cell">
        <title>Structure of the human and murine R-ras genes, novel genes closely related to ras proto-oncogenes.</title>
        <authorList>
            <person name="Lowe D.G."/>
            <person name="Capon D.J."/>
            <person name="Delwart E."/>
            <person name="Sakaguchi A.Y."/>
            <person name="Naylor S.L."/>
            <person name="Goeddel D.V."/>
        </authorList>
    </citation>
    <scope>NUCLEOTIDE SEQUENCE [MRNA]</scope>
</reference>
<reference key="2">
    <citation type="journal article" date="2004" name="Genome Res.">
        <title>The status, quality, and expansion of the NIH full-length cDNA project: the Mammalian Gene Collection (MGC).</title>
        <authorList>
            <consortium name="The MGC Project Team"/>
        </authorList>
    </citation>
    <scope>NUCLEOTIDE SEQUENCE [LARGE SCALE MRNA]</scope>
    <source>
        <strain>C57BL/6J</strain>
        <tissue>Mammary gland</tissue>
    </source>
</reference>
<reference key="3">
    <citation type="journal article" date="2010" name="Cell">
        <title>A tissue-specific atlas of mouse protein phosphorylation and expression.</title>
        <authorList>
            <person name="Huttlin E.L."/>
            <person name="Jedrychowski M.P."/>
            <person name="Elias J.E."/>
            <person name="Goswami T."/>
            <person name="Rad R."/>
            <person name="Beausoleil S.A."/>
            <person name="Villen J."/>
            <person name="Haas W."/>
            <person name="Sowa M.E."/>
            <person name="Gygi S.P."/>
        </authorList>
    </citation>
    <scope>IDENTIFICATION BY MASS SPECTROMETRY [LARGE SCALE ANALYSIS]</scope>
    <source>
        <tissue>Brain</tissue>
        <tissue>Brown adipose tissue</tissue>
        <tissue>Heart</tissue>
        <tissue>Kidney</tissue>
        <tissue>Liver</tissue>
        <tissue>Lung</tissue>
        <tissue>Pancreas</tissue>
        <tissue>Spleen</tissue>
        <tissue>Testis</tissue>
    </source>
</reference>
<dbReference type="EC" id="3.6.5.2" evidence="3"/>
<dbReference type="EMBL" id="M21019">
    <property type="protein sequence ID" value="AAA40038.1"/>
    <property type="molecule type" value="mRNA"/>
</dbReference>
<dbReference type="EMBL" id="BC009105">
    <property type="protein sequence ID" value="AAH09105.1"/>
    <property type="molecule type" value="mRNA"/>
</dbReference>
<dbReference type="CCDS" id="CCDS21226.1"/>
<dbReference type="RefSeq" id="NP_033127.1">
    <property type="nucleotide sequence ID" value="NM_009101.4"/>
</dbReference>
<dbReference type="RefSeq" id="XP_036008706.1">
    <property type="nucleotide sequence ID" value="XM_036152813.1"/>
</dbReference>
<dbReference type="SMR" id="P10833"/>
<dbReference type="BioGRID" id="203020">
    <property type="interactions" value="1"/>
</dbReference>
<dbReference type="FunCoup" id="P10833">
    <property type="interactions" value="1212"/>
</dbReference>
<dbReference type="STRING" id="10090.ENSMUSP00000042150"/>
<dbReference type="GlyGen" id="P10833">
    <property type="glycosylation" value="1 site, 1 O-linked glycan (1 site)"/>
</dbReference>
<dbReference type="iPTMnet" id="P10833"/>
<dbReference type="PhosphoSitePlus" id="P10833"/>
<dbReference type="SwissPalm" id="P10833"/>
<dbReference type="jPOST" id="P10833"/>
<dbReference type="PaxDb" id="10090-ENSMUSP00000042150"/>
<dbReference type="PeptideAtlas" id="P10833"/>
<dbReference type="ProteomicsDB" id="262708"/>
<dbReference type="Pumba" id="P10833"/>
<dbReference type="Antibodypedia" id="32074">
    <property type="antibodies" value="239 antibodies from 33 providers"/>
</dbReference>
<dbReference type="DNASU" id="20130"/>
<dbReference type="Ensembl" id="ENSMUST00000044111.10">
    <property type="protein sequence ID" value="ENSMUSP00000042150.8"/>
    <property type="gene ID" value="ENSMUSG00000038387.10"/>
</dbReference>
<dbReference type="GeneID" id="20130"/>
<dbReference type="KEGG" id="mmu:20130"/>
<dbReference type="UCSC" id="uc009gss.1">
    <property type="organism name" value="mouse"/>
</dbReference>
<dbReference type="AGR" id="MGI:98179"/>
<dbReference type="CTD" id="6237"/>
<dbReference type="MGI" id="MGI:98179">
    <property type="gene designation" value="Rras"/>
</dbReference>
<dbReference type="VEuPathDB" id="HostDB:ENSMUSG00000038387"/>
<dbReference type="eggNOG" id="KOG0395">
    <property type="taxonomic scope" value="Eukaryota"/>
</dbReference>
<dbReference type="GeneTree" id="ENSGT00940000160972"/>
<dbReference type="HOGENOM" id="CLU_041217_9_8_1"/>
<dbReference type="InParanoid" id="P10833"/>
<dbReference type="OMA" id="GCPCILL"/>
<dbReference type="OrthoDB" id="5976022at2759"/>
<dbReference type="PhylomeDB" id="P10833"/>
<dbReference type="TreeFam" id="TF312796"/>
<dbReference type="Reactome" id="R-MMU-416550">
    <property type="pathway name" value="Sema4D mediated inhibition of cell attachment and migration"/>
</dbReference>
<dbReference type="BioGRID-ORCS" id="20130">
    <property type="hits" value="3 hits in 83 CRISPR screens"/>
</dbReference>
<dbReference type="PRO" id="PR:P10833"/>
<dbReference type="Proteomes" id="UP000000589">
    <property type="component" value="Chromosome 7"/>
</dbReference>
<dbReference type="RNAct" id="P10833">
    <property type="molecule type" value="protein"/>
</dbReference>
<dbReference type="Bgee" id="ENSMUSG00000038387">
    <property type="expression patterns" value="Expressed in aorta tunica media and 257 other cell types or tissues"/>
</dbReference>
<dbReference type="ExpressionAtlas" id="P10833">
    <property type="expression patterns" value="baseline and differential"/>
</dbReference>
<dbReference type="GO" id="GO:0005829">
    <property type="term" value="C:cytosol"/>
    <property type="evidence" value="ECO:0000304"/>
    <property type="project" value="Reactome"/>
</dbReference>
<dbReference type="GO" id="GO:0005886">
    <property type="term" value="C:plasma membrane"/>
    <property type="evidence" value="ECO:0007669"/>
    <property type="project" value="UniProtKB-SubCell"/>
</dbReference>
<dbReference type="GO" id="GO:0019003">
    <property type="term" value="F:GDP binding"/>
    <property type="evidence" value="ECO:0000250"/>
    <property type="project" value="UniProtKB"/>
</dbReference>
<dbReference type="GO" id="GO:0005525">
    <property type="term" value="F:GTP binding"/>
    <property type="evidence" value="ECO:0007669"/>
    <property type="project" value="UniProtKB-KW"/>
</dbReference>
<dbReference type="GO" id="GO:0003924">
    <property type="term" value="F:GTPase activity"/>
    <property type="evidence" value="ECO:0000250"/>
    <property type="project" value="UniProtKB"/>
</dbReference>
<dbReference type="GO" id="GO:0044877">
    <property type="term" value="F:protein-containing complex binding"/>
    <property type="evidence" value="ECO:0000266"/>
    <property type="project" value="MGI"/>
</dbReference>
<dbReference type="GO" id="GO:0016477">
    <property type="term" value="P:cell migration"/>
    <property type="evidence" value="ECO:0000316"/>
    <property type="project" value="MGI"/>
</dbReference>
<dbReference type="GO" id="GO:0060325">
    <property type="term" value="P:face morphogenesis"/>
    <property type="evidence" value="ECO:0007669"/>
    <property type="project" value="Ensembl"/>
</dbReference>
<dbReference type="GO" id="GO:0002521">
    <property type="term" value="P:leukocyte differentiation"/>
    <property type="evidence" value="ECO:0007669"/>
    <property type="project" value="Ensembl"/>
</dbReference>
<dbReference type="GO" id="GO:1900148">
    <property type="term" value="P:negative regulation of Schwann cell migration"/>
    <property type="evidence" value="ECO:0000316"/>
    <property type="project" value="MGI"/>
</dbReference>
<dbReference type="GO" id="GO:0045766">
    <property type="term" value="P:positive regulation of angiogenesis"/>
    <property type="evidence" value="ECO:0000250"/>
    <property type="project" value="UniProtKB"/>
</dbReference>
<dbReference type="GO" id="GO:0010595">
    <property type="term" value="P:positive regulation of endothelial cell migration"/>
    <property type="evidence" value="ECO:0007669"/>
    <property type="project" value="Ensembl"/>
</dbReference>
<dbReference type="GO" id="GO:1904906">
    <property type="term" value="P:positive regulation of endothelial cell-matrix adhesion via fibronectin"/>
    <property type="evidence" value="ECO:0007669"/>
    <property type="project" value="Ensembl"/>
</dbReference>
<dbReference type="GO" id="GO:2001214">
    <property type="term" value="P:positive regulation of vasculogenesis"/>
    <property type="evidence" value="ECO:0007669"/>
    <property type="project" value="Ensembl"/>
</dbReference>
<dbReference type="GO" id="GO:0070372">
    <property type="term" value="P:regulation of ERK1 and ERK2 cascade"/>
    <property type="evidence" value="ECO:0007669"/>
    <property type="project" value="Ensembl"/>
</dbReference>
<dbReference type="GO" id="GO:0051896">
    <property type="term" value="P:regulation of phosphatidylinositol 3-kinase/protein kinase B signal transduction"/>
    <property type="evidence" value="ECO:0007669"/>
    <property type="project" value="Ensembl"/>
</dbReference>
<dbReference type="GO" id="GO:0036135">
    <property type="term" value="P:Schwann cell migration"/>
    <property type="evidence" value="ECO:0000316"/>
    <property type="project" value="MGI"/>
</dbReference>
<dbReference type="GO" id="GO:0007165">
    <property type="term" value="P:signal transduction"/>
    <property type="evidence" value="ECO:0007669"/>
    <property type="project" value="InterPro"/>
</dbReference>
<dbReference type="CDD" id="cd04145">
    <property type="entry name" value="M_R_Ras_like"/>
    <property type="match status" value="1"/>
</dbReference>
<dbReference type="FunFam" id="3.40.50.300:FF:000080">
    <property type="entry name" value="Ras-like GTPase Ras1"/>
    <property type="match status" value="1"/>
</dbReference>
<dbReference type="Gene3D" id="3.40.50.300">
    <property type="entry name" value="P-loop containing nucleotide triphosphate hydrolases"/>
    <property type="match status" value="1"/>
</dbReference>
<dbReference type="InterPro" id="IPR027417">
    <property type="entry name" value="P-loop_NTPase"/>
</dbReference>
<dbReference type="InterPro" id="IPR005225">
    <property type="entry name" value="Small_GTP-bd"/>
</dbReference>
<dbReference type="InterPro" id="IPR001806">
    <property type="entry name" value="Small_GTPase"/>
</dbReference>
<dbReference type="InterPro" id="IPR020849">
    <property type="entry name" value="Small_GTPase_Ras-type"/>
</dbReference>
<dbReference type="NCBIfam" id="TIGR00231">
    <property type="entry name" value="small_GTP"/>
    <property type="match status" value="1"/>
</dbReference>
<dbReference type="PANTHER" id="PTHR24070">
    <property type="entry name" value="RAS, DI-RAS, AND RHEB FAMILY MEMBERS OF SMALL GTPASE SUPERFAMILY"/>
    <property type="match status" value="1"/>
</dbReference>
<dbReference type="Pfam" id="PF00071">
    <property type="entry name" value="Ras"/>
    <property type="match status" value="1"/>
</dbReference>
<dbReference type="PRINTS" id="PR00449">
    <property type="entry name" value="RASTRNSFRMNG"/>
</dbReference>
<dbReference type="SMART" id="SM00175">
    <property type="entry name" value="RAB"/>
    <property type="match status" value="1"/>
</dbReference>
<dbReference type="SMART" id="SM00176">
    <property type="entry name" value="RAN"/>
    <property type="match status" value="1"/>
</dbReference>
<dbReference type="SMART" id="SM00173">
    <property type="entry name" value="RAS"/>
    <property type="match status" value="1"/>
</dbReference>
<dbReference type="SMART" id="SM00174">
    <property type="entry name" value="RHO"/>
    <property type="match status" value="1"/>
</dbReference>
<dbReference type="SUPFAM" id="SSF52540">
    <property type="entry name" value="P-loop containing nucleoside triphosphate hydrolases"/>
    <property type="match status" value="1"/>
</dbReference>
<dbReference type="PROSITE" id="PS51421">
    <property type="entry name" value="RAS"/>
    <property type="match status" value="1"/>
</dbReference>
<gene>
    <name type="primary">Rras</name>
</gene>
<accession>P10833</accession>
<proteinExistence type="evidence at protein level"/>
<feature type="chain" id="PRO_0000082651" description="Ras-related protein R-Ras">
    <location>
        <begin position="1"/>
        <end position="215"/>
    </location>
</feature>
<feature type="propeptide" id="PRO_0000281301" description="Removed in mature form" evidence="1">
    <location>
        <begin position="216"/>
        <end position="218"/>
    </location>
</feature>
<feature type="region of interest" description="Disordered" evidence="5">
    <location>
        <begin position="1"/>
        <end position="30"/>
    </location>
</feature>
<feature type="short sequence motif" description="Effector region">
    <location>
        <begin position="58"/>
        <end position="66"/>
    </location>
</feature>
<feature type="compositionally biased region" description="Gly residues" evidence="5">
    <location>
        <begin position="7"/>
        <end position="20"/>
    </location>
</feature>
<feature type="binding site" evidence="3">
    <location>
        <begin position="36"/>
        <end position="44"/>
    </location>
    <ligand>
        <name>GTP</name>
        <dbReference type="ChEBI" id="CHEBI:37565"/>
    </ligand>
</feature>
<feature type="binding site" evidence="1">
    <location>
        <begin position="83"/>
        <end position="87"/>
    </location>
    <ligand>
        <name>GTP</name>
        <dbReference type="ChEBI" id="CHEBI:37565"/>
    </ligand>
</feature>
<feature type="binding site" evidence="3">
    <location>
        <begin position="142"/>
        <end position="145"/>
    </location>
    <ligand>
        <name>GTP</name>
        <dbReference type="ChEBI" id="CHEBI:37565"/>
    </ligand>
</feature>
<feature type="binding site" evidence="3">
    <location>
        <begin position="172"/>
        <end position="174"/>
    </location>
    <ligand>
        <name>GTP</name>
        <dbReference type="ChEBI" id="CHEBI:37565"/>
    </ligand>
</feature>
<feature type="modified residue" description="Cysteine methyl ester" evidence="1">
    <location>
        <position position="215"/>
    </location>
</feature>
<feature type="lipid moiety-binding region" description="S-geranylgeranyl cysteine" evidence="1">
    <location>
        <position position="215"/>
    </location>
</feature>
<comment type="function">
    <text evidence="3">GTP-binding protein with GTPase activity, likely involved in the regulation of MAPK signaling pathway and thereby controlling multiple cellular processes (By similarity). Regulates the organization of the actin cytoskeleton (By similarity). With OSPBL3, modulates integrin beta-1 (ITGB1) activity (By similarity).</text>
</comment>
<comment type="catalytic activity">
    <reaction evidence="3">
        <text>GTP + H2O = GDP + phosphate + H(+)</text>
        <dbReference type="Rhea" id="RHEA:19669"/>
        <dbReference type="ChEBI" id="CHEBI:15377"/>
        <dbReference type="ChEBI" id="CHEBI:15378"/>
        <dbReference type="ChEBI" id="CHEBI:37565"/>
        <dbReference type="ChEBI" id="CHEBI:43474"/>
        <dbReference type="ChEBI" id="CHEBI:58189"/>
        <dbReference type="EC" id="3.6.5.2"/>
    </reaction>
    <physiologicalReaction direction="left-to-right" evidence="4">
        <dbReference type="Rhea" id="RHEA:19670"/>
    </physiologicalReaction>
</comment>
<comment type="subunit">
    <text evidence="2 3">Interacts with PLCE1 (By similarity). Interacts (active GTP-bound form preferentially) with RGS14 (By similarity). Interacts with OSBPL3 (By similarity). Interacts with ZDHHC19 (By similarity).</text>
</comment>
<comment type="subcellular location">
    <subcellularLocation>
        <location evidence="1">Cell membrane</location>
        <topology evidence="1">Lipid-anchor</topology>
        <orientation evidence="1">Cytoplasmic side</orientation>
    </subcellularLocation>
    <text>Inner surface of plasma membrane possibly with attachment requiring acylation of the C-terminal cysteine (By similarity with RAS).</text>
</comment>
<comment type="PTM">
    <text evidence="3">S-palmitoylated by ZDHHC19, leading to increased association with membranes and with rafts/caveolae as well as enhanced cell viability.</text>
</comment>
<comment type="similarity">
    <text evidence="6">Belongs to the small GTPase superfamily. Ras family.</text>
</comment>